<organism>
    <name type="scientific">Phaeosphaeria nodorum (strain SN15 / ATCC MYA-4574 / FGSC 10173)</name>
    <name type="common">Glume blotch fungus</name>
    <name type="synonym">Parastagonospora nodorum</name>
    <dbReference type="NCBI Taxonomy" id="321614"/>
    <lineage>
        <taxon>Eukaryota</taxon>
        <taxon>Fungi</taxon>
        <taxon>Dikarya</taxon>
        <taxon>Ascomycota</taxon>
        <taxon>Pezizomycotina</taxon>
        <taxon>Dothideomycetes</taxon>
        <taxon>Pleosporomycetidae</taxon>
        <taxon>Pleosporales</taxon>
        <taxon>Pleosporineae</taxon>
        <taxon>Phaeosphaeriaceae</taxon>
        <taxon>Parastagonospora</taxon>
    </lineage>
</organism>
<feature type="chain" id="PRO_0000409238" description="Bifunctional lycopene cyclase/phytoene synthase">
    <location>
        <begin position="1"/>
        <end position="585"/>
    </location>
</feature>
<feature type="transmembrane region" description="Helical" evidence="2">
    <location>
        <begin position="3"/>
        <end position="23"/>
    </location>
</feature>
<feature type="transmembrane region" description="Helical" evidence="2">
    <location>
        <begin position="35"/>
        <end position="55"/>
    </location>
</feature>
<feature type="transmembrane region" description="Helical" evidence="2">
    <location>
        <begin position="75"/>
        <end position="97"/>
    </location>
</feature>
<feature type="transmembrane region" description="Helical" evidence="2">
    <location>
        <begin position="123"/>
        <end position="141"/>
    </location>
</feature>
<feature type="transmembrane region" description="Helical" evidence="2">
    <location>
        <begin position="151"/>
        <end position="171"/>
    </location>
</feature>
<feature type="transmembrane region" description="Helical" evidence="2">
    <location>
        <begin position="173"/>
        <end position="193"/>
    </location>
</feature>
<feature type="transmembrane region" description="Helical" evidence="2">
    <location>
        <begin position="221"/>
        <end position="241"/>
    </location>
</feature>
<feature type="region of interest" description="Lycopene beta-cyclase" evidence="1">
    <location>
        <begin position="1"/>
        <end position="243"/>
    </location>
</feature>
<feature type="region of interest" description="Phytoene synthase" evidence="1">
    <location>
        <begin position="250"/>
        <end position="585"/>
    </location>
</feature>
<comment type="function">
    <text evidence="1">Bifunctional enzyme that catalyzes the reactions from geranylgeranyl diphosphate to phytoene (phytoene synthase) and lycopene to beta-carotene via the intermediate gamma-carotene (lycopene cyclase).</text>
</comment>
<comment type="catalytic activity">
    <reaction evidence="1">
        <text>all-trans-lycopene = gamma-carotene</text>
        <dbReference type="Rhea" id="RHEA:32219"/>
        <dbReference type="ChEBI" id="CHEBI:15948"/>
        <dbReference type="ChEBI" id="CHEBI:27740"/>
        <dbReference type="EC" id="5.5.1.19"/>
    </reaction>
</comment>
<comment type="catalytic activity">
    <reaction evidence="1">
        <text>gamma-carotene = all-trans-beta-carotene</text>
        <dbReference type="Rhea" id="RHEA:32239"/>
        <dbReference type="ChEBI" id="CHEBI:17579"/>
        <dbReference type="ChEBI" id="CHEBI:27740"/>
        <dbReference type="EC" id="5.5.1.19"/>
    </reaction>
</comment>
<comment type="catalytic activity">
    <reaction evidence="1">
        <text>2 (2E,6E,10E)-geranylgeranyl diphosphate = 15-cis-phytoene + 2 diphosphate</text>
        <dbReference type="Rhea" id="RHEA:34475"/>
        <dbReference type="ChEBI" id="CHEBI:27787"/>
        <dbReference type="ChEBI" id="CHEBI:33019"/>
        <dbReference type="ChEBI" id="CHEBI:58756"/>
        <dbReference type="EC" id="2.5.1.32"/>
    </reaction>
</comment>
<comment type="pathway">
    <text evidence="1">Carotenoid biosynthesis; beta-carotene biosynthesis.</text>
</comment>
<comment type="pathway">
    <text evidence="1">Carotenoid biosynthesis; phytoene biosynthesis; all-trans-phytoene from geranylgeranyl diphosphate: step 1/1.</text>
</comment>
<comment type="subcellular location">
    <subcellularLocation>
        <location evidence="3">Membrane</location>
        <topology evidence="3">Multi-pass membrane protein</topology>
    </subcellularLocation>
</comment>
<comment type="similarity">
    <text evidence="3">In the N-terminal section; belongs to the lycopene beta-cyclase family.</text>
</comment>
<comment type="similarity">
    <text evidence="3">In the C-terminal section; belongs to the phytoene/squalene synthase family.</text>
</comment>
<protein>
    <recommendedName>
        <fullName>Bifunctional lycopene cyclase/phytoene synthase</fullName>
    </recommendedName>
    <domain>
        <recommendedName>
            <fullName evidence="1">Lycopene beta-cyclase</fullName>
            <ecNumber evidence="1">5.5.1.19</ecNumber>
        </recommendedName>
        <alternativeName>
            <fullName evidence="1">Lycopene cyclase</fullName>
        </alternativeName>
    </domain>
    <domain>
        <recommendedName>
            <fullName evidence="1">Phytoene synthase</fullName>
            <ecNumber evidence="1">2.5.1.32</ecNumber>
        </recommendedName>
    </domain>
</protein>
<proteinExistence type="inferred from homology"/>
<dbReference type="EC" id="5.5.1.19" evidence="1"/>
<dbReference type="EC" id="2.5.1.32" evidence="1"/>
<dbReference type="EMBL" id="CH445325">
    <property type="protein sequence ID" value="EAT91834.1"/>
    <property type="molecule type" value="Genomic_DNA"/>
</dbReference>
<dbReference type="RefSeq" id="XP_001791029.1">
    <property type="nucleotide sequence ID" value="XM_001790977.1"/>
</dbReference>
<dbReference type="SMR" id="Q0V6M5"/>
<dbReference type="STRING" id="321614.Q0V6M5"/>
<dbReference type="EnsemblFungi" id="SNOT_00339">
    <property type="protein sequence ID" value="SNOT_00339"/>
    <property type="gene ID" value="SNOG_00339"/>
</dbReference>
<dbReference type="GeneID" id="5968524"/>
<dbReference type="KEGG" id="pno:SNOG_00339"/>
<dbReference type="VEuPathDB" id="FungiDB:JI435_003390"/>
<dbReference type="eggNOG" id="KOG1459">
    <property type="taxonomic scope" value="Eukaryota"/>
</dbReference>
<dbReference type="HOGENOM" id="CLU_012965_0_0_1"/>
<dbReference type="InParanoid" id="Q0V6M5"/>
<dbReference type="OMA" id="WACPFLL"/>
<dbReference type="UniPathway" id="UPA00799">
    <property type="reaction ID" value="UER00773"/>
</dbReference>
<dbReference type="UniPathway" id="UPA00802"/>
<dbReference type="Proteomes" id="UP000001055">
    <property type="component" value="Unassembled WGS sequence"/>
</dbReference>
<dbReference type="GO" id="GO:0016020">
    <property type="term" value="C:membrane"/>
    <property type="evidence" value="ECO:0007669"/>
    <property type="project" value="UniProtKB-SubCell"/>
</dbReference>
<dbReference type="GO" id="GO:0046905">
    <property type="term" value="F:15-cis-phytoene synthase activity"/>
    <property type="evidence" value="ECO:0000318"/>
    <property type="project" value="GO_Central"/>
</dbReference>
<dbReference type="GO" id="GO:0004311">
    <property type="term" value="F:geranylgeranyl diphosphate synthase activity"/>
    <property type="evidence" value="ECO:0007669"/>
    <property type="project" value="InterPro"/>
</dbReference>
<dbReference type="GO" id="GO:0016872">
    <property type="term" value="F:intramolecular lyase activity"/>
    <property type="evidence" value="ECO:0007669"/>
    <property type="project" value="InterPro"/>
</dbReference>
<dbReference type="GO" id="GO:0045436">
    <property type="term" value="F:lycopene beta cyclase activity"/>
    <property type="evidence" value="ECO:0007669"/>
    <property type="project" value="UniProtKB-ARBA"/>
</dbReference>
<dbReference type="GO" id="GO:0051996">
    <property type="term" value="F:squalene synthase [NAD(P)H] activity"/>
    <property type="evidence" value="ECO:0007669"/>
    <property type="project" value="InterPro"/>
</dbReference>
<dbReference type="GO" id="GO:0016117">
    <property type="term" value="P:carotenoid biosynthetic process"/>
    <property type="evidence" value="ECO:0007669"/>
    <property type="project" value="UniProtKB-KW"/>
</dbReference>
<dbReference type="CDD" id="cd00683">
    <property type="entry name" value="Trans_IPPS_HH"/>
    <property type="match status" value="1"/>
</dbReference>
<dbReference type="Gene3D" id="1.10.600.10">
    <property type="entry name" value="Farnesyl Diphosphate Synthase"/>
    <property type="match status" value="1"/>
</dbReference>
<dbReference type="InterPro" id="IPR008949">
    <property type="entry name" value="Isoprenoid_synthase_dom_sf"/>
</dbReference>
<dbReference type="InterPro" id="IPR017825">
    <property type="entry name" value="Lycopene_cyclase_dom"/>
</dbReference>
<dbReference type="InterPro" id="IPR002060">
    <property type="entry name" value="Squ/phyt_synthse"/>
</dbReference>
<dbReference type="InterPro" id="IPR019845">
    <property type="entry name" value="Squalene/phytoene_synthase_CS"/>
</dbReference>
<dbReference type="InterPro" id="IPR044843">
    <property type="entry name" value="Trans_IPPS_bact-type"/>
</dbReference>
<dbReference type="InterPro" id="IPR033904">
    <property type="entry name" value="Trans_IPPS_HH"/>
</dbReference>
<dbReference type="NCBIfam" id="TIGR03462">
    <property type="entry name" value="CarR_dom_SF"/>
    <property type="match status" value="2"/>
</dbReference>
<dbReference type="PANTHER" id="PTHR31480">
    <property type="entry name" value="BIFUNCTIONAL LYCOPENE CYCLASE/PHYTOENE SYNTHASE"/>
    <property type="match status" value="1"/>
</dbReference>
<dbReference type="Pfam" id="PF00494">
    <property type="entry name" value="SQS_PSY"/>
    <property type="match status" value="1"/>
</dbReference>
<dbReference type="SFLD" id="SFLDG01212">
    <property type="entry name" value="Phytoene_synthase_like"/>
    <property type="match status" value="1"/>
</dbReference>
<dbReference type="SFLD" id="SFLDG01018">
    <property type="entry name" value="Squalene/Phytoene_Synthase_Lik"/>
    <property type="match status" value="1"/>
</dbReference>
<dbReference type="SUPFAM" id="SSF48576">
    <property type="entry name" value="Terpenoid synthases"/>
    <property type="match status" value="1"/>
</dbReference>
<dbReference type="PROSITE" id="PS01045">
    <property type="entry name" value="SQUALEN_PHYTOEN_SYN_2"/>
    <property type="match status" value="1"/>
</dbReference>
<sequence>MGFDYAIVHVKYTIPPAVLLTLLYRPLFTKLDAFKVLFLVTVAVTATIPWDSYLIRTNIWSYPDHVVIGPTLLDIPLEEVFFFFIQTYNTTLLYLILSKPTFQPAYLRAGRPTASSPWKYQKLAGQLFLVGATVWAGLRVHENAKGTYTGLIVVWAAPIILLQWTLAYQFILGLPWTNTVLPIAIPTLYLWLVDTLALRRGTWVISPGTKYGVHLWDGLEIEEALFFFVTNTLIVFGQLAFDNALAVLYTFPALFPKPPSMPTPLDLINALWVSPYKYDRARLAGLQDAVLRLKRKSRSFYLASATFPGPLRSDLLLLYSFCRVADDLVDNAATAEEAKEWISKLHQYLDLVYSDAKSSTVSEDFVQAHFPSDARSALLQLPAHKLPRQPLQDLLHGFEMDLAFNTSSPIKTETDLRLYSERVAGTVAQMCIELIFRLYPSNMTSGEERKVVDAGNQMGMALQYVNIARDISVDAHIGRVYLPLDWLQESGLTYDEVLISPEGARMESLRMRLLEKAFSIYDGARGAIETLPVEARGPIRVAVESYMEIGRTLRQKGYTVRAGRATVSKWRRVIVAWRTLNKSIA</sequence>
<keyword id="KW-0125">Carotenoid biosynthesis</keyword>
<keyword id="KW-0413">Isomerase</keyword>
<keyword id="KW-0472">Membrane</keyword>
<keyword id="KW-0511">Multifunctional enzyme</keyword>
<keyword id="KW-0808">Transferase</keyword>
<keyword id="KW-0812">Transmembrane</keyword>
<keyword id="KW-1133">Transmembrane helix</keyword>
<evidence type="ECO:0000250" key="1">
    <source>
        <dbReference type="UniProtKB" id="P37295"/>
    </source>
</evidence>
<evidence type="ECO:0000255" key="2"/>
<evidence type="ECO:0000305" key="3"/>
<gene>
    <name type="ORF">SNOG_00339</name>
</gene>
<reference key="1">
    <citation type="journal article" date="2007" name="Plant Cell">
        <title>Dothideomycete-plant interactions illuminated by genome sequencing and EST analysis of the wheat pathogen Stagonospora nodorum.</title>
        <authorList>
            <person name="Hane J.K."/>
            <person name="Lowe R.G.T."/>
            <person name="Solomon P.S."/>
            <person name="Tan K.-C."/>
            <person name="Schoch C.L."/>
            <person name="Spatafora J.W."/>
            <person name="Crous P.W."/>
            <person name="Kodira C.D."/>
            <person name="Birren B.W."/>
            <person name="Galagan J.E."/>
            <person name="Torriani S.F.F."/>
            <person name="McDonald B.A."/>
            <person name="Oliver R.P."/>
        </authorList>
    </citation>
    <scope>NUCLEOTIDE SEQUENCE [LARGE SCALE GENOMIC DNA]</scope>
    <source>
        <strain>SN15 / ATCC MYA-4574 / FGSC 10173</strain>
    </source>
</reference>
<name>LCPS_PHANO</name>
<accession>Q0V6M5</accession>